<dbReference type="EMBL" id="AF095446">
    <property type="protein sequence ID" value="AAF29566.1"/>
    <property type="status" value="ALT_INIT"/>
    <property type="molecule type" value="mRNA"/>
</dbReference>
<dbReference type="RefSeq" id="NP_990111.1">
    <property type="nucleotide sequence ID" value="NM_204780.1"/>
</dbReference>
<dbReference type="SMR" id="Q9IAY5"/>
<dbReference type="BioGRID" id="675838">
    <property type="interactions" value="2"/>
</dbReference>
<dbReference type="FunCoup" id="Q9IAY5">
    <property type="interactions" value="661"/>
</dbReference>
<dbReference type="STRING" id="9031.ENSGALP00000045233"/>
<dbReference type="iPTMnet" id="Q9IAY5"/>
<dbReference type="PaxDb" id="9031-ENSGALP00000041772"/>
<dbReference type="GeneID" id="395557"/>
<dbReference type="KEGG" id="gga:395557"/>
<dbReference type="CTD" id="84309"/>
<dbReference type="VEuPathDB" id="HostDB:geneid_395557"/>
<dbReference type="eggNOG" id="ENOG502S20E">
    <property type="taxonomic scope" value="Eukaryota"/>
</dbReference>
<dbReference type="HOGENOM" id="CLU_075322_0_0_1"/>
<dbReference type="InParanoid" id="Q9IAY5"/>
<dbReference type="OrthoDB" id="5950381at2759"/>
<dbReference type="PhylomeDB" id="Q9IAY5"/>
<dbReference type="PRO" id="PR:Q9IAY5"/>
<dbReference type="Proteomes" id="UP000000539">
    <property type="component" value="Unassembled WGS sequence"/>
</dbReference>
<dbReference type="GO" id="GO:0005737">
    <property type="term" value="C:cytoplasm"/>
    <property type="evidence" value="ECO:0007669"/>
    <property type="project" value="UniProtKB-KW"/>
</dbReference>
<dbReference type="GO" id="GO:0005856">
    <property type="term" value="C:cytoskeleton"/>
    <property type="evidence" value="ECO:0007669"/>
    <property type="project" value="UniProtKB-SubCell"/>
</dbReference>
<dbReference type="GO" id="GO:0005925">
    <property type="term" value="C:focal adhesion"/>
    <property type="evidence" value="ECO:0007669"/>
    <property type="project" value="UniProtKB-SubCell"/>
</dbReference>
<dbReference type="GO" id="GO:0005634">
    <property type="term" value="C:nucleus"/>
    <property type="evidence" value="ECO:0000250"/>
    <property type="project" value="UniProtKB"/>
</dbReference>
<dbReference type="GO" id="GO:0005886">
    <property type="term" value="C:plasma membrane"/>
    <property type="evidence" value="ECO:0007669"/>
    <property type="project" value="UniProtKB-SubCell"/>
</dbReference>
<dbReference type="GO" id="GO:0030515">
    <property type="term" value="F:snoRNA binding"/>
    <property type="evidence" value="ECO:0000250"/>
    <property type="project" value="UniProtKB"/>
</dbReference>
<dbReference type="GO" id="GO:2001033">
    <property type="term" value="P:negative regulation of double-strand break repair via nonhomologous end joining"/>
    <property type="evidence" value="ECO:0000250"/>
    <property type="project" value="UniProtKB"/>
</dbReference>
<dbReference type="CDD" id="cd18869">
    <property type="entry name" value="NUDIX_U8_SnoRNA_DE_Nudt16"/>
    <property type="match status" value="1"/>
</dbReference>
<dbReference type="FunFam" id="3.90.79.10:FF:000038">
    <property type="entry name" value="Tudor-interacting repair regulator protein"/>
    <property type="match status" value="1"/>
</dbReference>
<dbReference type="Gene3D" id="3.90.79.10">
    <property type="entry name" value="Nucleoside Triphosphate Pyrophosphohydrolase"/>
    <property type="match status" value="1"/>
</dbReference>
<dbReference type="InterPro" id="IPR015797">
    <property type="entry name" value="NUDIX_hydrolase-like_dom_sf"/>
</dbReference>
<dbReference type="InterPro" id="IPR054754">
    <property type="entry name" value="NudT16"/>
</dbReference>
<dbReference type="PANTHER" id="PTHR31699">
    <property type="entry name" value="NUDIX T16 FAMILY MEMBER"/>
    <property type="match status" value="1"/>
</dbReference>
<dbReference type="PANTHER" id="PTHR31699:SF6">
    <property type="entry name" value="TUDOR-INTERACTING REPAIR REGULATOR PROTEIN"/>
    <property type="match status" value="1"/>
</dbReference>
<dbReference type="Pfam" id="PF22327">
    <property type="entry name" value="Nudt16-like"/>
    <property type="match status" value="1"/>
</dbReference>
<dbReference type="SUPFAM" id="SSF55811">
    <property type="entry name" value="Nudix"/>
    <property type="match status" value="1"/>
</dbReference>
<comment type="function">
    <text evidence="1">Key regulator of TP53BP1 required to stabilize TP53BP1 and regulate its recruitment to chromatin.</text>
</comment>
<comment type="subunit">
    <text evidence="3">Interacts (via the cytoplasmic part) with syndecan-4 (SDC4), but not with other syndecan proteins (PubMed:10633082).</text>
</comment>
<comment type="subcellular location">
    <subcellularLocation>
        <location evidence="1">Nucleus</location>
    </subcellularLocation>
    <subcellularLocation>
        <location evidence="6">Cytoplasm</location>
        <location evidence="6">Cytoskeleton</location>
    </subcellularLocation>
    <subcellularLocation>
        <location evidence="6">Cell membrane</location>
        <topology evidence="6">Lipid-anchor</topology>
        <orientation evidence="5">Cytoplasmic side</orientation>
    </subcellularLocation>
    <subcellularLocation>
        <location evidence="3">Cell junction</location>
        <location evidence="3">Focal adhesion</location>
    </subcellularLocation>
    <text evidence="3">Colocalizes with SDC4 in ventral plasma membrane adhesion plaques.</text>
</comment>
<comment type="tissue specificity">
    <text evidence="3">Ubiquitously expressed. Expressed in embryonic brain, eyes, gizzard, heart, intestine, kidney, liver, tibia and skin.</text>
</comment>
<comment type="PTM">
    <text evidence="3">Myristoylated in vitro; additional evidence is however required to confirm myristoylation in vivo.</text>
</comment>
<comment type="similarity">
    <text evidence="5">Belongs to the Nudix hydrolase family. TIRR subfamily.</text>
</comment>
<comment type="caution">
    <text evidence="5">Although strongly related to the nudix NUDT16 protein, lacks the Nudix box and is therefore not related to the rest of the family. Lacks a number of residues which are necessary for hydrolase activity and does not play a role in U8 snoRNA decapping activity.</text>
</comment>
<comment type="sequence caution" evidence="5">
    <conflict type="erroneous initiation">
        <sequence resource="EMBL-CDS" id="AAF29566"/>
    </conflict>
    <text>Extended N-terminus.</text>
</comment>
<sequence>MGVMAAVGALPAGAGSLPPLPTLGVPGVPELKPLTRYEAMRLGPGWSHSCHAMLYAPNPGMLFGRIPLRYAVLMQMRFDGLLGFPGGFVDRRYWSLEDGLNRVLGLGLGCVRLTEADYLCSHLTDGPHRVVAHLYARQLTLEELHTIEISAVHSRDHGLEVMGMVRVPLYTQKDRMGGLPNFLANSFVGTAKFQLLFALKILNMVPEEKLAEAVAATQKPKKPAIDHAAVAAAKQANELAAAARAGNEYADSGENQAAAHAAAELAEQQAAGLESQAVLEHLAAVPGAEAVVAELHAQPGADAVLEQPVAEAME</sequence>
<proteinExistence type="evidence at protein level"/>
<reference key="1">
    <citation type="journal article" date="2000" name="J. Cell Sci.">
        <title>Syndesmos, a protein that interacts with the cytoplasmic domain of syndecan-4, mediates cell spreading and actin cytoskeletal organization.</title>
        <authorList>
            <person name="Baciu P.C."/>
            <person name="Saoncella S."/>
            <person name="Lee S.H."/>
            <person name="Denhez F."/>
            <person name="Leuthardt D."/>
            <person name="Goetinck P.F."/>
        </authorList>
    </citation>
    <scope>NUCLEOTIDE SEQUENCE [MRNA]</scope>
    <scope>SUBCELLULAR LOCATION</scope>
    <scope>TISSUE SPECIFICITY</scope>
    <scope>INTERACTION WITH SDC4</scope>
    <scope>MYRISTOYLATION AT GLY-2</scope>
    <source>
        <tissue>Embryo</tissue>
    </source>
</reference>
<name>TIRR_CHICK</name>
<accession>Q9IAY5</accession>
<organism>
    <name type="scientific">Gallus gallus</name>
    <name type="common">Chicken</name>
    <dbReference type="NCBI Taxonomy" id="9031"/>
    <lineage>
        <taxon>Eukaryota</taxon>
        <taxon>Metazoa</taxon>
        <taxon>Chordata</taxon>
        <taxon>Craniata</taxon>
        <taxon>Vertebrata</taxon>
        <taxon>Euteleostomi</taxon>
        <taxon>Archelosauria</taxon>
        <taxon>Archosauria</taxon>
        <taxon>Dinosauria</taxon>
        <taxon>Saurischia</taxon>
        <taxon>Theropoda</taxon>
        <taxon>Coelurosauria</taxon>
        <taxon>Aves</taxon>
        <taxon>Neognathae</taxon>
        <taxon>Galloanserae</taxon>
        <taxon>Galliformes</taxon>
        <taxon>Phasianidae</taxon>
        <taxon>Phasianinae</taxon>
        <taxon>Gallus</taxon>
    </lineage>
</organism>
<keyword id="KW-0965">Cell junction</keyword>
<keyword id="KW-1003">Cell membrane</keyword>
<keyword id="KW-0963">Cytoplasm</keyword>
<keyword id="KW-0206">Cytoskeleton</keyword>
<keyword id="KW-0449">Lipoprotein</keyword>
<keyword id="KW-0472">Membrane</keyword>
<keyword id="KW-0519">Myristate</keyword>
<keyword id="KW-0539">Nucleus</keyword>
<keyword id="KW-1185">Reference proteome</keyword>
<keyword id="KW-0694">RNA-binding</keyword>
<feature type="initiator methionine" description="Removed" evidence="2">
    <location>
        <position position="1"/>
    </location>
</feature>
<feature type="chain" id="PRO_0000097647" description="Tudor-interacting repair regulator protein">
    <location>
        <begin position="2"/>
        <end position="314"/>
    </location>
</feature>
<feature type="lipid moiety-binding region" description="N-myristoyl glycine" evidence="6">
    <location>
        <position position="2"/>
    </location>
</feature>
<evidence type="ECO:0000250" key="1">
    <source>
        <dbReference type="UniProtKB" id="Q9BRJ7"/>
    </source>
</evidence>
<evidence type="ECO:0000255" key="2"/>
<evidence type="ECO:0000269" key="3">
    <source>
    </source>
</evidence>
<evidence type="ECO:0000303" key="4">
    <source>
    </source>
</evidence>
<evidence type="ECO:0000305" key="5"/>
<evidence type="ECO:0000305" key="6">
    <source>
    </source>
</evidence>
<protein>
    <recommendedName>
        <fullName evidence="1">Tudor-interacting repair regulator protein</fullName>
    </recommendedName>
    <alternativeName>
        <fullName evidence="1">NUDT16-like protein 1</fullName>
    </alternativeName>
    <alternativeName>
        <fullName evidence="4">Protein syndesmos</fullName>
    </alternativeName>
</protein>
<gene>
    <name type="primary">NUDT16L1</name>
    <name type="synonym">SDOS</name>
    <name evidence="1" type="synonym">TIRR</name>
</gene>